<name>ARLY_SALTI</name>
<reference key="1">
    <citation type="journal article" date="2001" name="Nature">
        <title>Complete genome sequence of a multiple drug resistant Salmonella enterica serovar Typhi CT18.</title>
        <authorList>
            <person name="Parkhill J."/>
            <person name="Dougan G."/>
            <person name="James K.D."/>
            <person name="Thomson N.R."/>
            <person name="Pickard D."/>
            <person name="Wain J."/>
            <person name="Churcher C.M."/>
            <person name="Mungall K.L."/>
            <person name="Bentley S.D."/>
            <person name="Holden M.T.G."/>
            <person name="Sebaihia M."/>
            <person name="Baker S."/>
            <person name="Basham D."/>
            <person name="Brooks K."/>
            <person name="Chillingworth T."/>
            <person name="Connerton P."/>
            <person name="Cronin A."/>
            <person name="Davis P."/>
            <person name="Davies R.M."/>
            <person name="Dowd L."/>
            <person name="White N."/>
            <person name="Farrar J."/>
            <person name="Feltwell T."/>
            <person name="Hamlin N."/>
            <person name="Haque A."/>
            <person name="Hien T.T."/>
            <person name="Holroyd S."/>
            <person name="Jagels K."/>
            <person name="Krogh A."/>
            <person name="Larsen T.S."/>
            <person name="Leather S."/>
            <person name="Moule S."/>
            <person name="O'Gaora P."/>
            <person name="Parry C."/>
            <person name="Quail M.A."/>
            <person name="Rutherford K.M."/>
            <person name="Simmonds M."/>
            <person name="Skelton J."/>
            <person name="Stevens K."/>
            <person name="Whitehead S."/>
            <person name="Barrell B.G."/>
        </authorList>
    </citation>
    <scope>NUCLEOTIDE SEQUENCE [LARGE SCALE GENOMIC DNA]</scope>
    <source>
        <strain>CT18</strain>
    </source>
</reference>
<reference key="2">
    <citation type="journal article" date="2003" name="J. Bacteriol.">
        <title>Comparative genomics of Salmonella enterica serovar Typhi strains Ty2 and CT18.</title>
        <authorList>
            <person name="Deng W."/>
            <person name="Liou S.-R."/>
            <person name="Plunkett G. III"/>
            <person name="Mayhew G.F."/>
            <person name="Rose D.J."/>
            <person name="Burland V."/>
            <person name="Kodoyianni V."/>
            <person name="Schwartz D.C."/>
            <person name="Blattner F.R."/>
        </authorList>
    </citation>
    <scope>NUCLEOTIDE SEQUENCE [LARGE SCALE GENOMIC DNA]</scope>
    <source>
        <strain>ATCC 700931 / Ty2</strain>
    </source>
</reference>
<dbReference type="EC" id="4.3.2.1" evidence="1"/>
<dbReference type="EMBL" id="AL513382">
    <property type="protein sequence ID" value="CAD09506.1"/>
    <property type="molecule type" value="Genomic_DNA"/>
</dbReference>
<dbReference type="EMBL" id="AE014613">
    <property type="protein sequence ID" value="AAO71009.1"/>
    <property type="molecule type" value="Genomic_DNA"/>
</dbReference>
<dbReference type="RefSeq" id="NP_457936.1">
    <property type="nucleotide sequence ID" value="NC_003198.1"/>
</dbReference>
<dbReference type="RefSeq" id="WP_001230038.1">
    <property type="nucleotide sequence ID" value="NZ_WSUR01000010.1"/>
</dbReference>
<dbReference type="SMR" id="Q8Z311"/>
<dbReference type="STRING" id="220341.gene:17587617"/>
<dbReference type="KEGG" id="stt:t3501"/>
<dbReference type="KEGG" id="sty:STY3750"/>
<dbReference type="PATRIC" id="fig|220341.7.peg.3825"/>
<dbReference type="eggNOG" id="COG0165">
    <property type="taxonomic scope" value="Bacteria"/>
</dbReference>
<dbReference type="HOGENOM" id="CLU_027272_2_3_6"/>
<dbReference type="OMA" id="DFAIEFC"/>
<dbReference type="OrthoDB" id="9769623at2"/>
<dbReference type="UniPathway" id="UPA00068">
    <property type="reaction ID" value="UER00114"/>
</dbReference>
<dbReference type="Proteomes" id="UP000000541">
    <property type="component" value="Chromosome"/>
</dbReference>
<dbReference type="Proteomes" id="UP000002670">
    <property type="component" value="Chromosome"/>
</dbReference>
<dbReference type="GO" id="GO:0005829">
    <property type="term" value="C:cytosol"/>
    <property type="evidence" value="ECO:0007669"/>
    <property type="project" value="TreeGrafter"/>
</dbReference>
<dbReference type="GO" id="GO:0004056">
    <property type="term" value="F:argininosuccinate lyase activity"/>
    <property type="evidence" value="ECO:0007669"/>
    <property type="project" value="UniProtKB-UniRule"/>
</dbReference>
<dbReference type="GO" id="GO:0042450">
    <property type="term" value="P:arginine biosynthetic process via ornithine"/>
    <property type="evidence" value="ECO:0007669"/>
    <property type="project" value="InterPro"/>
</dbReference>
<dbReference type="GO" id="GO:0006526">
    <property type="term" value="P:L-arginine biosynthetic process"/>
    <property type="evidence" value="ECO:0007669"/>
    <property type="project" value="UniProtKB-UniRule"/>
</dbReference>
<dbReference type="CDD" id="cd01359">
    <property type="entry name" value="Argininosuccinate_lyase"/>
    <property type="match status" value="1"/>
</dbReference>
<dbReference type="FunFam" id="1.10.275.10:FF:000004">
    <property type="entry name" value="Argininosuccinate lyase"/>
    <property type="match status" value="1"/>
</dbReference>
<dbReference type="FunFam" id="1.10.40.30:FF:000001">
    <property type="entry name" value="Argininosuccinate lyase"/>
    <property type="match status" value="1"/>
</dbReference>
<dbReference type="FunFam" id="1.20.200.10:FF:000006">
    <property type="entry name" value="Argininosuccinate lyase"/>
    <property type="match status" value="1"/>
</dbReference>
<dbReference type="Gene3D" id="1.10.40.30">
    <property type="entry name" value="Fumarase/aspartase (C-terminal domain)"/>
    <property type="match status" value="1"/>
</dbReference>
<dbReference type="Gene3D" id="1.20.200.10">
    <property type="entry name" value="Fumarase/aspartase (Central domain)"/>
    <property type="match status" value="1"/>
</dbReference>
<dbReference type="Gene3D" id="1.10.275.10">
    <property type="entry name" value="Fumarase/aspartase (N-terminal domain)"/>
    <property type="match status" value="1"/>
</dbReference>
<dbReference type="HAMAP" id="MF_00006">
    <property type="entry name" value="Arg_succ_lyase"/>
    <property type="match status" value="1"/>
</dbReference>
<dbReference type="InterPro" id="IPR029419">
    <property type="entry name" value="Arg_succ_lyase_C"/>
</dbReference>
<dbReference type="InterPro" id="IPR009049">
    <property type="entry name" value="Argininosuccinate_lyase"/>
</dbReference>
<dbReference type="InterPro" id="IPR024083">
    <property type="entry name" value="Fumarase/histidase_N"/>
</dbReference>
<dbReference type="InterPro" id="IPR020557">
    <property type="entry name" value="Fumarate_lyase_CS"/>
</dbReference>
<dbReference type="InterPro" id="IPR000362">
    <property type="entry name" value="Fumarate_lyase_fam"/>
</dbReference>
<dbReference type="InterPro" id="IPR022761">
    <property type="entry name" value="Fumarate_lyase_N"/>
</dbReference>
<dbReference type="InterPro" id="IPR008948">
    <property type="entry name" value="L-Aspartase-like"/>
</dbReference>
<dbReference type="NCBIfam" id="TIGR00838">
    <property type="entry name" value="argH"/>
    <property type="match status" value="1"/>
</dbReference>
<dbReference type="NCBIfam" id="NF008964">
    <property type="entry name" value="PRK12308.1"/>
    <property type="match status" value="1"/>
</dbReference>
<dbReference type="PANTHER" id="PTHR43814">
    <property type="entry name" value="ARGININOSUCCINATE LYASE"/>
    <property type="match status" value="1"/>
</dbReference>
<dbReference type="PANTHER" id="PTHR43814:SF1">
    <property type="entry name" value="ARGININOSUCCINATE LYASE"/>
    <property type="match status" value="1"/>
</dbReference>
<dbReference type="Pfam" id="PF14698">
    <property type="entry name" value="ASL_C2"/>
    <property type="match status" value="1"/>
</dbReference>
<dbReference type="Pfam" id="PF00206">
    <property type="entry name" value="Lyase_1"/>
    <property type="match status" value="1"/>
</dbReference>
<dbReference type="PRINTS" id="PR00145">
    <property type="entry name" value="ARGSUCLYASE"/>
</dbReference>
<dbReference type="PRINTS" id="PR00149">
    <property type="entry name" value="FUMRATELYASE"/>
</dbReference>
<dbReference type="SUPFAM" id="SSF48557">
    <property type="entry name" value="L-aspartase-like"/>
    <property type="match status" value="1"/>
</dbReference>
<dbReference type="PROSITE" id="PS00163">
    <property type="entry name" value="FUMARATE_LYASES"/>
    <property type="match status" value="1"/>
</dbReference>
<feature type="chain" id="PRO_0000137817" description="Argininosuccinate lyase">
    <location>
        <begin position="1"/>
        <end position="458"/>
    </location>
</feature>
<proteinExistence type="inferred from homology"/>
<evidence type="ECO:0000255" key="1">
    <source>
        <dbReference type="HAMAP-Rule" id="MF_00006"/>
    </source>
</evidence>
<gene>
    <name evidence="1" type="primary">argH</name>
    <name type="ordered locus">STY3750</name>
    <name type="ordered locus">t3501</name>
</gene>
<keyword id="KW-0028">Amino-acid biosynthesis</keyword>
<keyword id="KW-0055">Arginine biosynthesis</keyword>
<keyword id="KW-0963">Cytoplasm</keyword>
<keyword id="KW-0456">Lyase</keyword>
<organism>
    <name type="scientific">Salmonella typhi</name>
    <dbReference type="NCBI Taxonomy" id="90370"/>
    <lineage>
        <taxon>Bacteria</taxon>
        <taxon>Pseudomonadati</taxon>
        <taxon>Pseudomonadota</taxon>
        <taxon>Gammaproteobacteria</taxon>
        <taxon>Enterobacterales</taxon>
        <taxon>Enterobacteriaceae</taxon>
        <taxon>Salmonella</taxon>
    </lineage>
</organism>
<protein>
    <recommendedName>
        <fullName evidence="1">Argininosuccinate lyase</fullName>
        <shortName evidence="1">ASAL</shortName>
        <ecNumber evidence="1">4.3.2.1</ecNumber>
    </recommendedName>
    <alternativeName>
        <fullName evidence="1">Arginosuccinase</fullName>
    </alternativeName>
</protein>
<accession>Q8Z311</accession>
<comment type="catalytic activity">
    <reaction evidence="1">
        <text>2-(N(omega)-L-arginino)succinate = fumarate + L-arginine</text>
        <dbReference type="Rhea" id="RHEA:24020"/>
        <dbReference type="ChEBI" id="CHEBI:29806"/>
        <dbReference type="ChEBI" id="CHEBI:32682"/>
        <dbReference type="ChEBI" id="CHEBI:57472"/>
        <dbReference type="EC" id="4.3.2.1"/>
    </reaction>
</comment>
<comment type="pathway">
    <text evidence="1">Amino-acid biosynthesis; L-arginine biosynthesis; L-arginine from L-ornithine and carbamoyl phosphate: step 3/3.</text>
</comment>
<comment type="subcellular location">
    <subcellularLocation>
        <location evidence="1">Cytoplasm</location>
    </subcellularLocation>
</comment>
<comment type="similarity">
    <text evidence="1">Belongs to the lyase 1 family. Argininosuccinate lyase subfamily.</text>
</comment>
<sequence>MALWGGRFTQAADQRFKQFNDSLRFDYRLAEQDIVGSVAWSKALVTVGVLTADEQRQLEEALNVLLEEVRANPQQILQSDAEDIHSWVEGKLIDKVGQLGKKLHTGRSRNDQVATDLKLWCKETVMELLTANRQLQSALVETAQANQDAVMPGYTHLQRAQPVTFAHWCLAYVEMLARDESRLQDTLKRLDVSPLGCGALAGTAYEIDREQLAGWLGFTSATRNSLDSVSDRDHVLELLSDAAIGMVHLSRFAEDLIFFNSGEAGFVELSDRVTSGSSLMPQKKNPDALELIRGKCGRVQGALTGMMMTLKGLPLAYNKDMQEDKEGLFDALDIWLDCLHMAALVLDGIQVKRPRCQDAAQQGYANATELADYLVAKGVPFREAHHIVGEAVVEAIRQGKPLEALPLADLQKFSRVIGDDVYPILSLQSCLDKRAAKGGVSPQQVAQAIDDAKVRLAL</sequence>